<feature type="chain" id="PRO_0000339786" description="UPF0597 protein BF3560">
    <location>
        <begin position="1"/>
        <end position="428"/>
    </location>
</feature>
<organism>
    <name type="scientific">Bacteroides fragilis (strain ATCC 25285 / DSM 2151 / CCUG 4856 / JCM 11019 / LMG 10263 / NCTC 9343 / Onslow / VPI 2553 / EN-2)</name>
    <dbReference type="NCBI Taxonomy" id="272559"/>
    <lineage>
        <taxon>Bacteria</taxon>
        <taxon>Pseudomonadati</taxon>
        <taxon>Bacteroidota</taxon>
        <taxon>Bacteroidia</taxon>
        <taxon>Bacteroidales</taxon>
        <taxon>Bacteroidaceae</taxon>
        <taxon>Bacteroides</taxon>
    </lineage>
</organism>
<accession>Q5L9H9</accession>
<comment type="similarity">
    <text evidence="1">Belongs to the UPF0597 family.</text>
</comment>
<gene>
    <name type="ordered locus">BF3560</name>
</gene>
<proteinExistence type="inferred from homology"/>
<sequence>MTESERKQIIALIQREVIPAIGCTEPIAVALCVAKATETLGAKPEKIKVLLSANILKNAMGVGIPGTGMIGLPIAVALGALIGKSDYQLEVLKDSTPEAVEEGKKLIDEKRICISLKEDITEKLYIEVTCEAGGEQATAIISGGHTTFVYVAKGDEVLLNKQQTSGEEEKEETLELTLRKVYDFALTAPLDEIRFILETARLNKKAAEQSFQGDYGHALGKMLRGTYEHKIMGDSVFSHILSYTSAACDARMAGAMIPVMSNSGSGNQGISATLPVVVYAEENGKSEEELIRALMMSHLTVIYIKQSLGRLSALCGCVVAATGSSCGITWLMGGSYKQVAFAVQNMIANLTGMICDGAKPSCALKVTTGVSTAVLSAVMAMENRCVTSVEGIIDEDVDQSIRNLTRIGSQGMNETDRVVLDIMTHKGC</sequence>
<evidence type="ECO:0000255" key="1">
    <source>
        <dbReference type="HAMAP-Rule" id="MF_01845"/>
    </source>
</evidence>
<reference key="1">
    <citation type="journal article" date="2005" name="Science">
        <title>Extensive DNA inversions in the B. fragilis genome control variable gene expression.</title>
        <authorList>
            <person name="Cerdeno-Tarraga A.-M."/>
            <person name="Patrick S."/>
            <person name="Crossman L.C."/>
            <person name="Blakely G."/>
            <person name="Abratt V."/>
            <person name="Lennard N."/>
            <person name="Poxton I."/>
            <person name="Duerden B."/>
            <person name="Harris B."/>
            <person name="Quail M.A."/>
            <person name="Barron A."/>
            <person name="Clark L."/>
            <person name="Corton C."/>
            <person name="Doggett J."/>
            <person name="Holden M.T.G."/>
            <person name="Larke N."/>
            <person name="Line A."/>
            <person name="Lord A."/>
            <person name="Norbertczak H."/>
            <person name="Ormond D."/>
            <person name="Price C."/>
            <person name="Rabbinowitsch E."/>
            <person name="Woodward J."/>
            <person name="Barrell B.G."/>
            <person name="Parkhill J."/>
        </authorList>
    </citation>
    <scope>NUCLEOTIDE SEQUENCE [LARGE SCALE GENOMIC DNA]</scope>
    <source>
        <strain>ATCC 25285 / DSM 2151 / CCUG 4856 / JCM 11019 / LMG 10263 / NCTC 9343 / Onslow / VPI 2553 / EN-2</strain>
    </source>
</reference>
<protein>
    <recommendedName>
        <fullName evidence="1">UPF0597 protein BF3560</fullName>
    </recommendedName>
</protein>
<dbReference type="EMBL" id="CR626927">
    <property type="protein sequence ID" value="CAH09248.1"/>
    <property type="molecule type" value="Genomic_DNA"/>
</dbReference>
<dbReference type="RefSeq" id="WP_010993469.1">
    <property type="nucleotide sequence ID" value="NZ_UFTH01000001.1"/>
</dbReference>
<dbReference type="SMR" id="Q5L9H9"/>
<dbReference type="PaxDb" id="272559-BF9343_3467"/>
<dbReference type="KEGG" id="bfs:BF9343_3467"/>
<dbReference type="eggNOG" id="COG3681">
    <property type="taxonomic scope" value="Bacteria"/>
</dbReference>
<dbReference type="HOGENOM" id="CLU_051840_0_0_10"/>
<dbReference type="BioCyc" id="BFRA272559:G1GHZ-3788-MONOMER"/>
<dbReference type="Proteomes" id="UP000006731">
    <property type="component" value="Chromosome"/>
</dbReference>
<dbReference type="GO" id="GO:0080146">
    <property type="term" value="F:L-cysteine desulfhydrase activity"/>
    <property type="evidence" value="ECO:0007669"/>
    <property type="project" value="TreeGrafter"/>
</dbReference>
<dbReference type="GO" id="GO:0019450">
    <property type="term" value="P:L-cysteine catabolic process to pyruvate"/>
    <property type="evidence" value="ECO:0007669"/>
    <property type="project" value="TreeGrafter"/>
</dbReference>
<dbReference type="HAMAP" id="MF_01845">
    <property type="entry name" value="UPF0597"/>
    <property type="match status" value="1"/>
</dbReference>
<dbReference type="InterPro" id="IPR005130">
    <property type="entry name" value="Ser_deHydtase-like_asu"/>
</dbReference>
<dbReference type="InterPro" id="IPR021144">
    <property type="entry name" value="UPF0597"/>
</dbReference>
<dbReference type="PANTHER" id="PTHR30501">
    <property type="entry name" value="UPF0597 PROTEIN YHAM"/>
    <property type="match status" value="1"/>
</dbReference>
<dbReference type="PANTHER" id="PTHR30501:SF2">
    <property type="entry name" value="UPF0597 PROTEIN YHAM"/>
    <property type="match status" value="1"/>
</dbReference>
<dbReference type="Pfam" id="PF03313">
    <property type="entry name" value="SDH_alpha"/>
    <property type="match status" value="1"/>
</dbReference>
<dbReference type="PIRSF" id="PIRSF006054">
    <property type="entry name" value="UCP006054"/>
    <property type="match status" value="1"/>
</dbReference>
<name>Y3560_BACFN</name>